<organism>
    <name type="scientific">Mus musculus</name>
    <name type="common">Mouse</name>
    <dbReference type="NCBI Taxonomy" id="10090"/>
    <lineage>
        <taxon>Eukaryota</taxon>
        <taxon>Metazoa</taxon>
        <taxon>Chordata</taxon>
        <taxon>Craniata</taxon>
        <taxon>Vertebrata</taxon>
        <taxon>Euteleostomi</taxon>
        <taxon>Mammalia</taxon>
        <taxon>Eutheria</taxon>
        <taxon>Euarchontoglires</taxon>
        <taxon>Glires</taxon>
        <taxon>Rodentia</taxon>
        <taxon>Myomorpha</taxon>
        <taxon>Muroidea</taxon>
        <taxon>Muridae</taxon>
        <taxon>Murinae</taxon>
        <taxon>Mus</taxon>
        <taxon>Mus</taxon>
    </lineage>
</organism>
<evidence type="ECO:0000255" key="1"/>
<evidence type="ECO:0000255" key="2">
    <source>
        <dbReference type="PROSITE-ProRule" id="PRU00521"/>
    </source>
</evidence>
<evidence type="ECO:0000269" key="3">
    <source>
    </source>
</evidence>
<evidence type="ECO:0000269" key="4">
    <source>
    </source>
</evidence>
<evidence type="ECO:0000269" key="5">
    <source>
    </source>
</evidence>
<evidence type="ECO:0000269" key="6">
    <source>
    </source>
</evidence>
<evidence type="ECO:0000269" key="7">
    <source>
    </source>
</evidence>
<evidence type="ECO:0000303" key="8">
    <source>
    </source>
</evidence>
<evidence type="ECO:0000312" key="9">
    <source>
        <dbReference type="MGI" id="MGI:3527454"/>
    </source>
</evidence>
<evidence type="ECO:0007744" key="10">
    <source>
        <dbReference type="PDB" id="8ITF"/>
    </source>
</evidence>
<evidence type="ECO:0007744" key="11">
    <source>
        <dbReference type="PDB" id="8IW1"/>
    </source>
</evidence>
<evidence type="ECO:0007744" key="12">
    <source>
        <dbReference type="PDB" id="8IW4"/>
    </source>
</evidence>
<evidence type="ECO:0007744" key="13">
    <source>
        <dbReference type="PDB" id="8IW7"/>
    </source>
</evidence>
<evidence type="ECO:0007744" key="14">
    <source>
        <dbReference type="PDB" id="8IW9"/>
    </source>
</evidence>
<evidence type="ECO:0007744" key="15">
    <source>
        <dbReference type="PDB" id="8IWE"/>
    </source>
</evidence>
<evidence type="ECO:0007744" key="16">
    <source>
        <dbReference type="PDB" id="8IWM"/>
    </source>
</evidence>
<evidence type="ECO:0007829" key="17">
    <source>
        <dbReference type="PDB" id="8IW1"/>
    </source>
</evidence>
<evidence type="ECO:0007829" key="18">
    <source>
        <dbReference type="PDB" id="8IW7"/>
    </source>
</evidence>
<evidence type="ECO:0007829" key="19">
    <source>
        <dbReference type="PDB" id="8IW9"/>
    </source>
</evidence>
<evidence type="ECO:0007829" key="20">
    <source>
        <dbReference type="PDB" id="8IWE"/>
    </source>
</evidence>
<keyword id="KW-0002">3D-structure</keyword>
<keyword id="KW-1003">Cell membrane</keyword>
<keyword id="KW-1015">Disulfide bond</keyword>
<keyword id="KW-0297">G-protein coupled receptor</keyword>
<keyword id="KW-0325">Glycoprotein</keyword>
<keyword id="KW-0472">Membrane</keyword>
<keyword id="KW-0675">Receptor</keyword>
<keyword id="KW-1185">Reference proteome</keyword>
<keyword id="KW-0807">Transducer</keyword>
<keyword id="KW-0812">Transmembrane</keyword>
<keyword id="KW-1133">Transmembrane helix</keyword>
<gene>
    <name evidence="8 9" type="primary">Taar9</name>
</gene>
<proteinExistence type="evidence at protein level"/>
<name>TAAR9_MOUSE</name>
<feature type="chain" id="PRO_0000070182" description="Trace amine-associated receptor 9">
    <location>
        <begin position="1"/>
        <end position="348"/>
    </location>
</feature>
<feature type="topological domain" description="Extracellular" evidence="7 10 11 12 13 14 15 16">
    <location>
        <begin position="1"/>
        <end position="33"/>
    </location>
</feature>
<feature type="transmembrane region" description="Helical; Name=1" evidence="7 10 11 12 13 14 15 16">
    <location>
        <begin position="34"/>
        <end position="58"/>
    </location>
</feature>
<feature type="topological domain" description="Cytoplasmic" evidence="7 10 11 12 13 14 15 16">
    <location>
        <begin position="59"/>
        <end position="68"/>
    </location>
</feature>
<feature type="transmembrane region" description="Helical; Name=2" evidence="7 10 11 12 13 14 15 16">
    <location>
        <begin position="69"/>
        <end position="90"/>
    </location>
</feature>
<feature type="topological domain" description="Extracellular" evidence="7 10 11 12 13 14 15 16">
    <location>
        <begin position="91"/>
        <end position="105"/>
    </location>
</feature>
<feature type="transmembrane region" description="Helical; Name=3" evidence="7 10 11 12 13 14 15 16">
    <location>
        <begin position="106"/>
        <end position="128"/>
    </location>
</feature>
<feature type="topological domain" description="Cytoplasmic" evidence="7 10 11 12 13 14 15 16">
    <location>
        <begin position="129"/>
        <end position="148"/>
    </location>
</feature>
<feature type="transmembrane region" description="Helical; Name=4" evidence="7 10 11 12 13 14 15 16">
    <location>
        <begin position="149"/>
        <end position="170"/>
    </location>
</feature>
<feature type="topological domain" description="Extracellular" evidence="7 10 11 12 13 14 15 16">
    <location>
        <begin position="171"/>
        <end position="196"/>
    </location>
</feature>
<feature type="transmembrane region" description="Helical; Name=5" evidence="7 10 11 12 13 14 15 16">
    <location>
        <begin position="197"/>
        <end position="218"/>
    </location>
</feature>
<feature type="topological domain" description="Cytoplasmic" evidence="7 10 11 12 13 14 15 16">
    <location>
        <begin position="219"/>
        <end position="256"/>
    </location>
</feature>
<feature type="transmembrane region" description="Helical; Name=6" evidence="7 10 11 12 13 14 15 16">
    <location>
        <begin position="257"/>
        <end position="280"/>
    </location>
</feature>
<feature type="topological domain" description="Extracellular" evidence="7 10 11 12 13 14 15 16">
    <location>
        <begin position="281"/>
        <end position="293"/>
    </location>
</feature>
<feature type="transmembrane region" description="Helical; Name=7" evidence="7 10 11 12 13 14 15 16">
    <location>
        <begin position="294"/>
        <end position="314"/>
    </location>
</feature>
<feature type="topological domain" description="Cytoplasmic" evidence="7 10 11 12 13 14 15 16">
    <location>
        <begin position="315"/>
        <end position="348"/>
    </location>
</feature>
<feature type="region of interest" description="Extracellular Loop 2 (ECL2)" evidence="7">
    <location>
        <begin position="174"/>
        <end position="187"/>
    </location>
</feature>
<feature type="binding site" evidence="7 12 15">
    <location>
        <position position="112"/>
    </location>
    <ligand>
        <name>spermidine</name>
        <dbReference type="ChEBI" id="CHEBI:57834"/>
    </ligand>
</feature>
<feature type="binding site" evidence="7 12 15">
    <location>
        <position position="113"/>
    </location>
    <ligand>
        <name>spermidine</name>
        <dbReference type="ChEBI" id="CHEBI:57834"/>
    </ligand>
</feature>
<feature type="glycosylation site" description="N-linked (GlcNAc...) asparagine" evidence="1">
    <location>
        <position position="19"/>
    </location>
</feature>
<feature type="disulfide bond" evidence="7 10 12 14 15">
    <location>
        <begin position="22"/>
        <end position="186"/>
    </location>
</feature>
<feature type="disulfide bond" evidence="2 7 11 12 13 15 16">
    <location>
        <begin position="105"/>
        <end position="190"/>
    </location>
</feature>
<feature type="mutagenesis site" description="Decreased binding to spermidine." evidence="6">
    <original>L</original>
    <variation>W</variation>
    <location>
        <position position="35"/>
    </location>
</feature>
<feature type="mutagenesis site" description="Abolished activation of G(s) G alpha protein in response to spermidine-binding." evidence="7">
    <original>T</original>
    <variation>A</variation>
    <location>
        <position position="109"/>
    </location>
</feature>
<feature type="mutagenesis site" description="Abolished activation of G(s) G alpha protein in response to trace amine-binding." evidence="5 7">
    <original>D</original>
    <variation>A</variation>
    <variation>N</variation>
    <variation>E</variation>
    <location>
        <position position="112"/>
    </location>
</feature>
<feature type="mutagenesis site" description="Abolished activation of G(s) G alpha protein in response to spermidine-binding." evidence="7">
    <original>T</original>
    <variation>A</variation>
    <variation>I</variation>
    <variation>V</variation>
    <variation>L</variation>
    <location>
        <position position="113"/>
    </location>
</feature>
<feature type="mutagenesis site" description="Abolished activation of G(s) G alpha protein in response to trace amine-binding." evidence="7">
    <original>F</original>
    <variation>T</variation>
    <variation>L</variation>
    <location>
        <position position="117"/>
    </location>
</feature>
<feature type="mutagenesis site" description="Abolished activation of G(s) G alpha protein in response to trace amine-binding." evidence="7">
    <original>F</original>
    <variation>V</variation>
    <location>
        <position position="168"/>
    </location>
</feature>
<feature type="mutagenesis site" description="Decreased binding to spermidine." evidence="6">
    <original>EE</original>
    <variation>AA</variation>
    <location>
        <begin position="178"/>
        <end position="179"/>
    </location>
</feature>
<feature type="mutagenesis site" description="Does not affect binding to spermidine." evidence="6">
    <original>E</original>
    <variation>A</variation>
    <location>
        <position position="178"/>
    </location>
</feature>
<feature type="mutagenesis site" description="Does not affect binding to spermidine." evidence="6">
    <original>E</original>
    <variation>A</variation>
    <location>
        <position position="179"/>
    </location>
</feature>
<feature type="mutagenesis site" description="Decreased activation of GNAL/G(olf) G alpha protein in response to trace amine-binding without affecting activation of G(s) G alpha proteins." evidence="7">
    <original>A</original>
    <variation>I</variation>
    <variation>L</variation>
    <location>
        <position position="263"/>
    </location>
</feature>
<feature type="mutagenesis site" description="Abolished activation of G(s) G alpha protein in response to trace amine-binding." evidence="7">
    <original>W</original>
    <variation>A</variation>
    <location>
        <position position="271"/>
    </location>
</feature>
<feature type="mutagenesis site" description="Abolished activation of G(s) G alpha protein in response to trace amine-binding." evidence="5 7">
    <original>Y</original>
    <variation>C</variation>
    <variation>A</variation>
    <variation>L</variation>
    <location>
        <position position="274"/>
    </location>
</feature>
<feature type="mutagenesis site" description="Decreased response following spermidine-binding." evidence="6">
    <original>D</original>
    <variation>E</variation>
    <variation>N</variation>
    <location>
        <position position="281"/>
    </location>
</feature>
<feature type="mutagenesis site" description="Decreased binding to spermidine." evidence="6">
    <original>N</original>
    <variation>W</variation>
    <location>
        <position position="285"/>
    </location>
</feature>
<feature type="mutagenesis site" description="Decreased binding to spermidine." evidence="6">
    <original>A</original>
    <variation>W</variation>
    <location>
        <position position="290"/>
    </location>
</feature>
<feature type="mutagenesis site" description="Abolished activation of G(s) G alpha protein in response to trace amine-binding." evidence="7">
    <original>Y</original>
    <variation>L</variation>
    <location>
        <position position="293"/>
    </location>
</feature>
<feature type="mutagenesis site" description="Reduced activation in response to spermidine- or spermine-binding." evidence="5 6">
    <original>E</original>
    <variation>D</variation>
    <variation>Q</variation>
    <variation>A</variation>
    <location>
        <position position="294"/>
    </location>
</feature>
<feature type="mutagenesis site" description="Decreased binding to spermidine." evidence="6">
    <original>I</original>
    <variation>W</variation>
    <location>
        <position position="295"/>
    </location>
</feature>
<feature type="mutagenesis site" description="Abolished activation of G(s) G alpha protein in response to trace amine-binding." evidence="7">
    <original>V</original>
    <variation>C</variation>
    <variation>T</variation>
    <location>
        <position position="297"/>
    </location>
</feature>
<feature type="mutagenesis site" description="Increased activation in response to cadaverine- or spermidine-binding." evidence="5">
    <original>W</original>
    <variation>F</variation>
    <variation>Y</variation>
    <location>
        <position position="298"/>
    </location>
</feature>
<feature type="mutagenesis site" description="Abolished activation of G(s) G alpha protein in response to trace amine-binding." evidence="7">
    <original>V</original>
    <variation>A</variation>
    <variation>G</variation>
    <location>
        <position position="300"/>
    </location>
</feature>
<feature type="mutagenesis site" description="Abolished activation in response to cadaverin- or spermidine-binding." evidence="5">
    <original>V</original>
    <variation>T</variation>
    <location>
        <position position="300"/>
    </location>
</feature>
<feature type="mutagenesis site" description="Abolished activation of G(s) G alpha protein in response to trace amine-binding." evidence="5 7">
    <original>Y</original>
    <variation>A</variation>
    <location>
        <position position="301"/>
    </location>
</feature>
<feature type="helix" evidence="17">
    <location>
        <begin position="34"/>
        <end position="37"/>
    </location>
</feature>
<feature type="helix" evidence="18">
    <location>
        <begin position="38"/>
        <end position="58"/>
    </location>
</feature>
<feature type="helix" evidence="18">
    <location>
        <begin position="61"/>
        <end position="63"/>
    </location>
</feature>
<feature type="helix" evidence="18">
    <location>
        <begin position="66"/>
        <end position="83"/>
    </location>
</feature>
<feature type="helix" evidence="18">
    <location>
        <begin position="85"/>
        <end position="95"/>
    </location>
</feature>
<feature type="helix" evidence="18">
    <location>
        <begin position="103"/>
        <end position="115"/>
    </location>
</feature>
<feature type="helix" evidence="18">
    <location>
        <begin position="118"/>
        <end position="135"/>
    </location>
</feature>
<feature type="helix" evidence="18">
    <location>
        <begin position="137"/>
        <end position="139"/>
    </location>
</feature>
<feature type="helix" evidence="18">
    <location>
        <begin position="140"/>
        <end position="143"/>
    </location>
</feature>
<feature type="helix" evidence="18">
    <location>
        <begin position="146"/>
        <end position="162"/>
    </location>
</feature>
<feature type="helix" evidence="18">
    <location>
        <begin position="165"/>
        <end position="168"/>
    </location>
</feature>
<feature type="helix" evidence="19">
    <location>
        <begin position="172"/>
        <end position="174"/>
    </location>
</feature>
<feature type="helix" evidence="18">
    <location>
        <begin position="178"/>
        <end position="184"/>
    </location>
</feature>
<feature type="turn" evidence="18">
    <location>
        <begin position="185"/>
        <end position="187"/>
    </location>
</feature>
<feature type="helix" evidence="18">
    <location>
        <begin position="196"/>
        <end position="231"/>
    </location>
</feature>
<feature type="turn" evidence="17">
    <location>
        <begin position="246"/>
        <end position="248"/>
    </location>
</feature>
<feature type="strand" evidence="17">
    <location>
        <begin position="249"/>
        <end position="252"/>
    </location>
</feature>
<feature type="helix" evidence="18">
    <location>
        <begin position="254"/>
        <end position="268"/>
    </location>
</feature>
<feature type="helix" evidence="18">
    <location>
        <begin position="271"/>
        <end position="279"/>
    </location>
</feature>
<feature type="helix" evidence="18">
    <location>
        <begin position="280"/>
        <end position="282"/>
    </location>
</feature>
<feature type="turn" evidence="20">
    <location>
        <begin position="283"/>
        <end position="285"/>
    </location>
</feature>
<feature type="helix" evidence="18">
    <location>
        <begin position="290"/>
        <end position="292"/>
    </location>
</feature>
<feature type="helix" evidence="18">
    <location>
        <begin position="294"/>
        <end position="310"/>
    </location>
</feature>
<feature type="strand" evidence="18">
    <location>
        <begin position="311"/>
        <end position="315"/>
    </location>
</feature>
<feature type="helix" evidence="18">
    <location>
        <begin position="316"/>
        <end position="322"/>
    </location>
</feature>
<feature type="helix" evidence="18">
    <location>
        <begin position="323"/>
        <end position="325"/>
    </location>
</feature>
<feature type="turn" evidence="19">
    <location>
        <begin position="328"/>
        <end position="333"/>
    </location>
</feature>
<sequence>MTSDFSPEPPMELCYENVNGSCIKSSYAPWPRAILYGVLGLGALLAVFGNLLVIIAILHFKQLHTPTNFLVASLACADFLVGVTVMPFSTVRSVESCWYFGESYCKFHTCFDTSFCFASLFHLCCISIDRYIAVTDPLTYPTKFTVSVSGLCIALSWFFSVTYSFSIFYTGANEEGIEELVVALTCVGGCQAPLNQNWVLLCFLLFFLPTVVMVFLYGRIFLVAKYQARKIEGTANQAQASSESYKERVAKRERKAAKTLGIAMAAFLVSWLPYIIDAVIDAYMNFITPAYVYEILVWCVYYNSAMNPLIYAFFYPWFRKAIKLIVSGKVFRADSSTTNLFSEEAGAG</sequence>
<dbReference type="EMBL" id="AY702340">
    <property type="protein sequence ID" value="AAV70149.1"/>
    <property type="molecule type" value="Genomic_DNA"/>
</dbReference>
<dbReference type="EMBL" id="BC139084">
    <property type="protein sequence ID" value="AAI39085.1"/>
    <property type="molecule type" value="mRNA"/>
</dbReference>
<dbReference type="EMBL" id="BC139085">
    <property type="protein sequence ID" value="AAI39086.1"/>
    <property type="molecule type" value="mRNA"/>
</dbReference>
<dbReference type="CCDS" id="CCDS23748.1"/>
<dbReference type="RefSeq" id="NP_001010831.1">
    <property type="nucleotide sequence ID" value="NM_001010831.1"/>
</dbReference>
<dbReference type="PDB" id="8ITF">
    <property type="method" value="EM"/>
    <property type="resolution" value="3.46 A"/>
    <property type="chains" value="R=1-348"/>
</dbReference>
<dbReference type="PDB" id="8IW1">
    <property type="method" value="EM"/>
    <property type="resolution" value="3.40 A"/>
    <property type="chains" value="R=1-348"/>
</dbReference>
<dbReference type="PDB" id="8IW4">
    <property type="method" value="EM"/>
    <property type="resolution" value="3.49 A"/>
    <property type="chains" value="R=1-348"/>
</dbReference>
<dbReference type="PDB" id="8IW7">
    <property type="method" value="EM"/>
    <property type="resolution" value="2.97 A"/>
    <property type="chains" value="R=1-348"/>
</dbReference>
<dbReference type="PDB" id="8IW9">
    <property type="method" value="EM"/>
    <property type="resolution" value="3.08 A"/>
    <property type="chains" value="R=1-348"/>
</dbReference>
<dbReference type="PDB" id="8IWE">
    <property type="method" value="EM"/>
    <property type="resolution" value="3.40 A"/>
    <property type="chains" value="R=1-348"/>
</dbReference>
<dbReference type="PDB" id="8IWM">
    <property type="method" value="EM"/>
    <property type="resolution" value="3.17 A"/>
    <property type="chains" value="R=1-348"/>
</dbReference>
<dbReference type="PDBsum" id="8ITF"/>
<dbReference type="PDBsum" id="8IW1"/>
<dbReference type="PDBsum" id="8IW4"/>
<dbReference type="PDBsum" id="8IW7"/>
<dbReference type="PDBsum" id="8IW9"/>
<dbReference type="PDBsum" id="8IWE"/>
<dbReference type="PDBsum" id="8IWM"/>
<dbReference type="EMDB" id="EMD-35705"/>
<dbReference type="EMDB" id="EMD-35761"/>
<dbReference type="EMDB" id="EMD-35762"/>
<dbReference type="EMDB" id="EMD-35763"/>
<dbReference type="EMDB" id="EMD-35764"/>
<dbReference type="EMDB" id="EMD-35765"/>
<dbReference type="EMDB" id="EMD-35771"/>
<dbReference type="SMR" id="Q5QD04"/>
<dbReference type="FunCoup" id="Q5QD04">
    <property type="interactions" value="705"/>
</dbReference>
<dbReference type="STRING" id="10090.ENSMUSP00000043552"/>
<dbReference type="GlyCosmos" id="Q5QD04">
    <property type="glycosylation" value="1 site, No reported glycans"/>
</dbReference>
<dbReference type="GlyGen" id="Q5QD04">
    <property type="glycosylation" value="1 site"/>
</dbReference>
<dbReference type="PhosphoSitePlus" id="Q5QD04"/>
<dbReference type="PaxDb" id="10090-ENSMUSP00000043552"/>
<dbReference type="Antibodypedia" id="72575">
    <property type="antibodies" value="124 antibodies from 21 providers"/>
</dbReference>
<dbReference type="Ensembl" id="ENSMUST00000041180.7">
    <property type="protein sequence ID" value="ENSMUSP00000043552.6"/>
    <property type="gene ID" value="ENSMUSG00000037424.7"/>
</dbReference>
<dbReference type="GeneID" id="503558"/>
<dbReference type="KEGG" id="mmu:503558"/>
<dbReference type="UCSC" id="uc007eqr.1">
    <property type="organism name" value="mouse"/>
</dbReference>
<dbReference type="AGR" id="MGI:3527454"/>
<dbReference type="CTD" id="134860"/>
<dbReference type="MGI" id="MGI:3527454">
    <property type="gene designation" value="Taar9"/>
</dbReference>
<dbReference type="VEuPathDB" id="HostDB:ENSMUSG00000037424"/>
<dbReference type="eggNOG" id="KOG3656">
    <property type="taxonomic scope" value="Eukaryota"/>
</dbReference>
<dbReference type="GeneTree" id="ENSGT00940000162919"/>
<dbReference type="HOGENOM" id="CLU_009579_11_0_1"/>
<dbReference type="InParanoid" id="Q5QD04"/>
<dbReference type="OMA" id="TCVRGCQ"/>
<dbReference type="OrthoDB" id="5959645at2759"/>
<dbReference type="PhylomeDB" id="Q5QD04"/>
<dbReference type="TreeFam" id="TF343107"/>
<dbReference type="Reactome" id="R-MMU-375280">
    <property type="pathway name" value="Amine ligand-binding receptors"/>
</dbReference>
<dbReference type="Reactome" id="R-MMU-418555">
    <property type="pathway name" value="G alpha (s) signalling events"/>
</dbReference>
<dbReference type="BioGRID-ORCS" id="503558">
    <property type="hits" value="1 hit in 77 CRISPR screens"/>
</dbReference>
<dbReference type="PRO" id="PR:Q5QD04"/>
<dbReference type="Proteomes" id="UP000000589">
    <property type="component" value="Chromosome 10"/>
</dbReference>
<dbReference type="RNAct" id="Q5QD04">
    <property type="molecule type" value="protein"/>
</dbReference>
<dbReference type="Bgee" id="ENSMUSG00000037424">
    <property type="expression patterns" value="Expressed in epiblast cell in embryo and 3 other cell types or tissues"/>
</dbReference>
<dbReference type="GO" id="GO:0005886">
    <property type="term" value="C:plasma membrane"/>
    <property type="evidence" value="ECO:0000314"/>
    <property type="project" value="UniProtKB"/>
</dbReference>
<dbReference type="GO" id="GO:0001594">
    <property type="term" value="F:trace-amine receptor activity"/>
    <property type="evidence" value="ECO:0000314"/>
    <property type="project" value="UniProtKB"/>
</dbReference>
<dbReference type="GO" id="GO:0007189">
    <property type="term" value="P:adenylate cyclase-activating G protein-coupled receptor signaling pathway"/>
    <property type="evidence" value="ECO:0000314"/>
    <property type="project" value="UniProtKB"/>
</dbReference>
<dbReference type="GO" id="GO:0007186">
    <property type="term" value="P:G protein-coupled receptor signaling pathway"/>
    <property type="evidence" value="ECO:0000314"/>
    <property type="project" value="UniProtKB"/>
</dbReference>
<dbReference type="CDD" id="cd15316">
    <property type="entry name" value="7tmA_TAAR6_8_9"/>
    <property type="match status" value="1"/>
</dbReference>
<dbReference type="FunFam" id="1.20.1070.10:FF:000030">
    <property type="entry name" value="trace amine-associated receptor 1"/>
    <property type="match status" value="1"/>
</dbReference>
<dbReference type="Gene3D" id="1.20.1070.10">
    <property type="entry name" value="Rhodopsin 7-helix transmembrane proteins"/>
    <property type="match status" value="1"/>
</dbReference>
<dbReference type="InterPro" id="IPR000276">
    <property type="entry name" value="GPCR_Rhodpsn"/>
</dbReference>
<dbReference type="InterPro" id="IPR017452">
    <property type="entry name" value="GPCR_Rhodpsn_7TM"/>
</dbReference>
<dbReference type="InterPro" id="IPR050569">
    <property type="entry name" value="TAAR"/>
</dbReference>
<dbReference type="InterPro" id="IPR009132">
    <property type="entry name" value="TAAR_fam"/>
</dbReference>
<dbReference type="PANTHER" id="PTHR24249">
    <property type="entry name" value="HISTAMINE RECEPTOR-RELATED G-PROTEIN COUPLED RECEPTOR"/>
    <property type="match status" value="1"/>
</dbReference>
<dbReference type="PANTHER" id="PTHR24249:SF79">
    <property type="entry name" value="TRACE AMINE-ASSOCIATED RECEPTOR 9"/>
    <property type="match status" value="1"/>
</dbReference>
<dbReference type="Pfam" id="PF00001">
    <property type="entry name" value="7tm_1"/>
    <property type="match status" value="1"/>
</dbReference>
<dbReference type="PRINTS" id="PR00237">
    <property type="entry name" value="GPCRRHODOPSN"/>
</dbReference>
<dbReference type="PRINTS" id="PR01830">
    <property type="entry name" value="TRACEAMINER"/>
</dbReference>
<dbReference type="SMART" id="SM01381">
    <property type="entry name" value="7TM_GPCR_Srsx"/>
    <property type="match status" value="1"/>
</dbReference>
<dbReference type="SUPFAM" id="SSF81321">
    <property type="entry name" value="Family A G protein-coupled receptor-like"/>
    <property type="match status" value="1"/>
</dbReference>
<dbReference type="PROSITE" id="PS00237">
    <property type="entry name" value="G_PROTEIN_RECEP_F1_1"/>
    <property type="match status" value="1"/>
</dbReference>
<dbReference type="PROSITE" id="PS50262">
    <property type="entry name" value="G_PROTEIN_RECEP_F1_2"/>
    <property type="match status" value="1"/>
</dbReference>
<accession>Q5QD04</accession>
<accession>B2RT07</accession>
<comment type="function">
    <text evidence="5 6 7">Olfactory receptor specific for trace amines, such as triethylamine, N,N-dimethylcyclohexylamine (DMCHA), beta-phenylethylamine (beta-PEA), cadaverine (CAD) and polyamines such as spermine and spermidine (PubMed:34600890, PubMed:35177711, PubMed:37225986). Trace amine compounds are enriched in animal body fluids and act on trace amine-associated receptors (TAARs) to elicit both intraspecific and interspecific innate behaviors (PubMed:37225986). Trace amine-binding causes a conformation change that triggers signaling via G(s)-class of G alpha proteins (GNAL or GNAS) (PubMed:37225986). In mature olfactory sensory neurons, Taar9 is coupled with GNAL/G(olf)G alpha protein and mediates activation of adenylate cyclase activity to activate cAMP signaling and eventually transmit odorant signals to achieve membrane depolarization (PubMed:37225986). In immature olfactory sensory neurons, Taar9 is coupled with GNAS/G(s) G alpha proteins (PubMed:37225986).</text>
</comment>
<comment type="subcellular location">
    <subcellularLocation>
        <location evidence="7">Cell membrane</location>
        <topology evidence="7">Multi-pass membrane protein</topology>
    </subcellularLocation>
</comment>
<comment type="tissue specificity">
    <text evidence="3 5">Specifically expressed in neurons of the olfactory epithelium.</text>
</comment>
<comment type="domain">
    <text evidence="7">In addition to the well known disulfide bond common to G-protein coupled receptor 1 family, trace amine-associated receptors (TAARs) contain an unique disulfide bond (Cys-22-Cys-186) connecting the N-terminus to the extracellular Loop 2 (ECL2), which is required for agonist-induced receptor activation.</text>
</comment>
<comment type="disruption phenotype">
    <text evidence="4">Mice lacking Taar2, Taar3, Taar4, Taar5, Taar6, Taar7a, Taar7b, Taar7d, Taar7e, Taar7f, Taar8a, Taar8b, Taar8c and Taar9 show no visible phenotype or behavioral deficits (PubMed:23624375). They however show an absence of aversion to low concentrations of amines such as 2-phenylethylamine, isopentylamine, N-methylpiperidine and cadaverine (PubMed:23624375).</text>
</comment>
<comment type="similarity">
    <text evidence="2">Belongs to the G-protein coupled receptor 1 family.</text>
</comment>
<protein>
    <recommendedName>
        <fullName evidence="8">Trace amine-associated receptor 9</fullName>
        <shortName>TaR-9</shortName>
        <shortName evidence="8">Trace amine receptor 9</shortName>
        <shortName evidence="8">mTaar9</shortName>
    </recommendedName>
</protein>
<reference key="1">
    <citation type="journal article" date="2005" name="Genomics">
        <title>Trace amine-associated receptors form structurally and functionally distinct subfamilies of novel G protein-coupled receptors.</title>
        <authorList>
            <person name="Lindemann L."/>
            <person name="Ebeling M."/>
            <person name="Kratochwil N.A."/>
            <person name="Bunzow J.R."/>
            <person name="Grandy D.K."/>
            <person name="Hoener M.C."/>
        </authorList>
    </citation>
    <scope>NUCLEOTIDE SEQUENCE [GENOMIC DNA]</scope>
    <source>
        <strain>C57BL/6J</strain>
    </source>
</reference>
<reference key="2">
    <citation type="journal article" date="2004" name="Genome Res.">
        <title>The status, quality, and expansion of the NIH full-length cDNA project: the Mammalian Gene Collection (MGC).</title>
        <authorList>
            <consortium name="The MGC Project Team"/>
        </authorList>
    </citation>
    <scope>NUCLEOTIDE SEQUENCE [LARGE SCALE MRNA]</scope>
    <source>
        <tissue>Brain</tissue>
    </source>
</reference>
<reference key="3">
    <citation type="journal article" date="2006" name="Nature">
        <title>A second class of chemosensory receptors in the olfactory epithelium.</title>
        <authorList>
            <person name="Liberles S.D."/>
            <person name="Buck L.B."/>
        </authorList>
    </citation>
    <scope>TISSUE SPECIFICITY</scope>
</reference>
<reference key="4">
    <citation type="journal article" date="2013" name="Nature">
        <title>Non-redundant coding of aversive odours in the main olfactory pathway.</title>
        <authorList>
            <person name="Dewan A."/>
            <person name="Pacifico R."/>
            <person name="Zhan R."/>
            <person name="Rinberg D."/>
            <person name="Bozza T."/>
        </authorList>
    </citation>
    <scope>DISRUPTION PHENOTYPE</scope>
</reference>
<reference key="5">
    <citation type="journal article" date="2021" name="J. Biol. Chem.">
        <title>Convergent olfactory trace amine-associated receptors detect biogenic polyamines with distinct motifs via a conserved binding site.</title>
        <authorList>
            <person name="Jia L."/>
            <person name="Li S."/>
            <person name="Dai W."/>
            <person name="Guo L."/>
            <person name="Xu Z."/>
            <person name="Scott A.M."/>
            <person name="Zhang Z."/>
            <person name="Ren J."/>
            <person name="Zhang Q."/>
            <person name="Dexheimer T.S."/>
            <person name="Chung-Davidson Y.W."/>
            <person name="Neubig R.R."/>
            <person name="Li Q."/>
            <person name="Li W."/>
        </authorList>
    </citation>
    <scope>FUNCTION</scope>
    <scope>TISSUE SPECIFICITY</scope>
    <scope>MUTAGENESIS OF ASP-112; TYR-274; GLU-294; TRP-298; VAL-300 AND TYR-301</scope>
</reference>
<reference key="6">
    <citation type="journal article" date="2022" name="Sci. Rep.">
        <title>Two entry tunnels in mouse TAAR9 suggest the possibility of multi-entry tunnels in olfactory receptors.</title>
        <authorList>
            <person name="Xu Z."/>
            <person name="Guo L."/>
            <person name="Qian X."/>
            <person name="Yu C."/>
            <person name="Li S."/>
            <person name="Zhu C."/>
            <person name="Ma X."/>
            <person name="Li H."/>
            <person name="Zhu G."/>
            <person name="Zhou H."/>
            <person name="Dai W."/>
            <person name="Li Q."/>
            <person name="Gao X."/>
        </authorList>
    </citation>
    <scope>FUNCTION</scope>
    <scope>MUTAGENESIS OF LEU-35; 178-GLU-GLU-179; GLU-178; GLU-179; ASP-281; ASN-285; ALA-290; GLU-294 AND ILE-295</scope>
</reference>
<reference evidence="10 11 12 13 14 15 16" key="7">
    <citation type="journal article" date="2023" name="Nature">
        <title>Structural basis of amine odorant perception by a mammal olfactory receptor.</title>
        <authorList>
            <person name="Guo L."/>
            <person name="Cheng J."/>
            <person name="Lian S."/>
            <person name="Liu Q."/>
            <person name="Lu Y."/>
            <person name="Zheng Y."/>
            <person name="Zhu K."/>
            <person name="Zhang M."/>
            <person name="Kong Y."/>
            <person name="Zhang C."/>
            <person name="Rong N."/>
            <person name="Zhuang Y."/>
            <person name="Fang G."/>
            <person name="Jiang J."/>
            <person name="Zhang T."/>
            <person name="Han X."/>
            <person name="Liu Z."/>
            <person name="Xia M."/>
            <person name="Liu S."/>
            <person name="Zhang L."/>
            <person name="Liberles S.D."/>
            <person name="Yu X."/>
            <person name="Xu Y."/>
            <person name="Yang F."/>
            <person name="Li Q."/>
            <person name="Sun J.P."/>
        </authorList>
    </citation>
    <scope>STRUCTURE BY ELECTRON MICROSCOPY (2.97 ANGSTROMS) IN COMPLEX WITH N</scope>
    <scope>N-DIMETHYLCYCLOHEXYLAMINE; BETA-PHENYLETHYLAMINE; SPERMIDINE; GNAL; GNAS; GNB1; GNG2</scope>
    <scope>FUNCTION</scope>
    <scope>SUBCELLULAR LOCATION</scope>
    <scope>DISULFIDE BONDS</scope>
    <scope>DOMAIN</scope>
    <scope>MUTAGENESIS OF THR-109; ASP-112; THR-113; PHE-117; PHE-168; ALA-263; TRP-271; TYR-274; TYR-293; VAL-297; VAL-300 AND TYR-301</scope>
</reference>